<proteinExistence type="inferred from homology"/>
<feature type="chain" id="PRO_0000057625" description="Hydroxymethylglutaryl-CoA synthase">
    <location>
        <begin position="1"/>
        <end position="350"/>
    </location>
</feature>
<feature type="active site" description="Proton donor/acceptor" evidence="1">
    <location>
        <position position="80"/>
    </location>
</feature>
<feature type="active site" description="Acyl-thioester intermediate" evidence="1">
    <location>
        <position position="112"/>
    </location>
</feature>
<feature type="active site" description="Proton donor/acceptor" evidence="1">
    <location>
        <position position="237"/>
    </location>
</feature>
<feature type="binding site" evidence="1">
    <location>
        <position position="29"/>
    </location>
    <ligand>
        <name>(3S)-3-hydroxy-3-methylglutaryl-CoA</name>
        <dbReference type="ChEBI" id="CHEBI:43074"/>
    </ligand>
</feature>
<feature type="binding site" evidence="1">
    <location>
        <position position="112"/>
    </location>
    <ligand>
        <name>(3S)-3-hydroxy-3-methylglutaryl-CoA</name>
        <dbReference type="ChEBI" id="CHEBI:43074"/>
    </ligand>
</feature>
<feature type="binding site" evidence="1">
    <location>
        <position position="153"/>
    </location>
    <ligand>
        <name>(3S)-3-hydroxy-3-methylglutaryl-CoA</name>
        <dbReference type="ChEBI" id="CHEBI:43074"/>
    </ligand>
</feature>
<feature type="binding site" evidence="1">
    <location>
        <position position="204"/>
    </location>
    <ligand>
        <name>(3S)-3-hydroxy-3-methylglutaryl-CoA</name>
        <dbReference type="ChEBI" id="CHEBI:43074"/>
    </ligand>
</feature>
<feature type="binding site" evidence="1">
    <location>
        <position position="237"/>
    </location>
    <ligand>
        <name>(3S)-3-hydroxy-3-methylglutaryl-CoA</name>
        <dbReference type="ChEBI" id="CHEBI:43074"/>
    </ligand>
</feature>
<feature type="binding site" evidence="1">
    <location>
        <position position="242"/>
    </location>
    <ligand>
        <name>CoA</name>
        <dbReference type="ChEBI" id="CHEBI:57287"/>
        <note>ligand shared with acetoacetyl-CoA thiolase</note>
    </ligand>
</feature>
<feature type="binding site" evidence="1">
    <location>
        <position position="269"/>
    </location>
    <ligand>
        <name>(3S)-3-hydroxy-3-methylglutaryl-CoA</name>
        <dbReference type="ChEBI" id="CHEBI:43074"/>
    </ligand>
</feature>
<feature type="binding site" evidence="1">
    <location>
        <position position="299"/>
    </location>
    <ligand>
        <name>(3S)-3-hydroxy-3-methylglutaryl-CoA</name>
        <dbReference type="ChEBI" id="CHEBI:43074"/>
    </ligand>
</feature>
<keyword id="KW-0012">Acyltransferase</keyword>
<keyword id="KW-0414">Isoprene biosynthesis</keyword>
<keyword id="KW-1185">Reference proteome</keyword>
<keyword id="KW-0808">Transferase</keyword>
<evidence type="ECO:0000255" key="1">
    <source>
        <dbReference type="HAMAP-Rule" id="MF_01409"/>
    </source>
</evidence>
<protein>
    <recommendedName>
        <fullName evidence="1">Hydroxymethylglutaryl-CoA synthase</fullName>
        <shortName evidence="1">HMG-CoA synthase</shortName>
        <shortName evidence="1">HMGCS</shortName>
        <ecNumber evidence="1">2.3.3.10</ecNumber>
    </recommendedName>
</protein>
<sequence>MLSGILGWGAYIPRYRIKVEDIAKMWGYDEAVVKSLGLTEKSVPGHDEDSTTIAWESSINAIKRAQVDTSKIRLVLFGSESKVYAVKPTSTILIDALGINNYSATADMEFACRAASVGLRLASSFVLHNNDSYALVIGADTAQSNPGDVLELSSAAAGVAFVVGKTDEKHSAAVIEYSSSYTSDTPDFWRRDGTPYPVHGEGFTGEPAYFHHIISAVNDLLQNSGLKISDFDYFVFHQPNGKFPIQVAKKLGVPLEKVKQGLVSPYIGNPYNASALLGLAKVLDIAKPGERILVAPFGSGAGSDAFSILVSEGILAKQKLAKTVEYYINNKKLVSYAEYAKYTNKIKVYE</sequence>
<accession>Q9UWU0</accession>
<organism>
    <name type="scientific">Saccharolobus solfataricus (strain ATCC 35092 / DSM 1617 / JCM 11322 / P2)</name>
    <name type="common">Sulfolobus solfataricus</name>
    <dbReference type="NCBI Taxonomy" id="273057"/>
    <lineage>
        <taxon>Archaea</taxon>
        <taxon>Thermoproteota</taxon>
        <taxon>Thermoprotei</taxon>
        <taxon>Sulfolobales</taxon>
        <taxon>Sulfolobaceae</taxon>
        <taxon>Saccharolobus</taxon>
    </lineage>
</organism>
<comment type="function">
    <text evidence="1">Catalyzes the condensation of acetyl-CoA with acetoacetyl-CoA to form 3-hydroxy-3-methylglutaryl-CoA (HMG-CoA). Functions in the mevalonate (MVA) pathway leading to isopentenyl diphosphate (IPP), a key precursor for the biosynthesis of isoprenoid compounds that are building blocks of archaeal membrane lipids.</text>
</comment>
<comment type="catalytic activity">
    <reaction evidence="1">
        <text>acetoacetyl-CoA + acetyl-CoA + H2O = (3S)-3-hydroxy-3-methylglutaryl-CoA + CoA + H(+)</text>
        <dbReference type="Rhea" id="RHEA:10188"/>
        <dbReference type="ChEBI" id="CHEBI:15377"/>
        <dbReference type="ChEBI" id="CHEBI:15378"/>
        <dbReference type="ChEBI" id="CHEBI:43074"/>
        <dbReference type="ChEBI" id="CHEBI:57286"/>
        <dbReference type="ChEBI" id="CHEBI:57287"/>
        <dbReference type="ChEBI" id="CHEBI:57288"/>
        <dbReference type="EC" id="2.3.3.10"/>
    </reaction>
    <physiologicalReaction direction="left-to-right" evidence="1">
        <dbReference type="Rhea" id="RHEA:10189"/>
    </physiologicalReaction>
</comment>
<comment type="pathway">
    <text evidence="1">Metabolic intermediate biosynthesis; (R)-mevalonate biosynthesis; (R)-mevalonate from acetyl-CoA: step 2/3.</text>
</comment>
<comment type="subunit">
    <text evidence="1">Interacts with acetoacetyl-CoA thiolase that catalyzes the precedent step in the pathway and with a DUF35 protein. The acetoacetyl-CoA thiolase/HMG-CoA synthase complex channels the intermediate via a fused CoA-binding site, which allows for efficient coupling of the endergonic thiolase reaction with the exergonic HMGCS reaction.</text>
</comment>
<comment type="similarity">
    <text evidence="1">Belongs to the thiolase-like superfamily. Archaeal HMG-CoA synthase family.</text>
</comment>
<name>HMGCS_SACS2</name>
<dbReference type="EC" id="2.3.3.10" evidence="1"/>
<dbReference type="EMBL" id="Y18930">
    <property type="protein sequence ID" value="CAB57764.1"/>
    <property type="molecule type" value="Genomic_DNA"/>
</dbReference>
<dbReference type="EMBL" id="AE006641">
    <property type="protein sequence ID" value="AAK40854.1"/>
    <property type="molecule type" value="Genomic_DNA"/>
</dbReference>
<dbReference type="PIR" id="G90199">
    <property type="entry name" value="G90199"/>
</dbReference>
<dbReference type="RefSeq" id="WP_009991040.1">
    <property type="nucleotide sequence ID" value="NC_002754.1"/>
</dbReference>
<dbReference type="SMR" id="Q9UWU0"/>
<dbReference type="FunCoup" id="Q9UWU0">
    <property type="interactions" value="152"/>
</dbReference>
<dbReference type="STRING" id="273057.SSO0535"/>
<dbReference type="PaxDb" id="273057-SSO0535"/>
<dbReference type="EnsemblBacteria" id="AAK40854">
    <property type="protein sequence ID" value="AAK40854"/>
    <property type="gene ID" value="SSO0535"/>
</dbReference>
<dbReference type="KEGG" id="sso:SSO0535"/>
<dbReference type="PATRIC" id="fig|273057.12.peg.533"/>
<dbReference type="eggNOG" id="arCOG01767">
    <property type="taxonomic scope" value="Archaea"/>
</dbReference>
<dbReference type="HOGENOM" id="CLU_039592_7_0_2"/>
<dbReference type="InParanoid" id="Q9UWU0"/>
<dbReference type="PhylomeDB" id="Q9UWU0"/>
<dbReference type="UniPathway" id="UPA00058">
    <property type="reaction ID" value="UER00102"/>
</dbReference>
<dbReference type="Proteomes" id="UP000001974">
    <property type="component" value="Chromosome"/>
</dbReference>
<dbReference type="GO" id="GO:0003985">
    <property type="term" value="F:acetyl-CoA C-acetyltransferase activity"/>
    <property type="evidence" value="ECO:0007669"/>
    <property type="project" value="UniProtKB-UniRule"/>
</dbReference>
<dbReference type="GO" id="GO:0004421">
    <property type="term" value="F:hydroxymethylglutaryl-CoA synthase activity"/>
    <property type="evidence" value="ECO:0000318"/>
    <property type="project" value="GO_Central"/>
</dbReference>
<dbReference type="GO" id="GO:0006084">
    <property type="term" value="P:acetyl-CoA metabolic process"/>
    <property type="evidence" value="ECO:0000318"/>
    <property type="project" value="GO_Central"/>
</dbReference>
<dbReference type="GO" id="GO:0010142">
    <property type="term" value="P:farnesyl diphosphate biosynthetic process, mevalonate pathway"/>
    <property type="evidence" value="ECO:0000318"/>
    <property type="project" value="GO_Central"/>
</dbReference>
<dbReference type="GO" id="GO:0019287">
    <property type="term" value="P:isopentenyl diphosphate biosynthetic process, mevalonate pathway"/>
    <property type="evidence" value="ECO:0007669"/>
    <property type="project" value="UniProtKB-UniRule"/>
</dbReference>
<dbReference type="CDD" id="cd00827">
    <property type="entry name" value="init_cond_enzymes"/>
    <property type="match status" value="1"/>
</dbReference>
<dbReference type="FunFam" id="3.40.47.10:FF:000046">
    <property type="entry name" value="UPF0219 protein M1627_1703"/>
    <property type="match status" value="1"/>
</dbReference>
<dbReference type="Gene3D" id="3.40.47.10">
    <property type="match status" value="1"/>
</dbReference>
<dbReference type="HAMAP" id="MF_01409">
    <property type="entry name" value="HMG_CoA_synth_arch"/>
    <property type="match status" value="1"/>
</dbReference>
<dbReference type="InterPro" id="IPR013747">
    <property type="entry name" value="ACP_syn_III_C"/>
</dbReference>
<dbReference type="InterPro" id="IPR004656">
    <property type="entry name" value="HMG_CoA_Synthase"/>
</dbReference>
<dbReference type="InterPro" id="IPR016039">
    <property type="entry name" value="Thiolase-like"/>
</dbReference>
<dbReference type="NCBIfam" id="TIGR00748">
    <property type="entry name" value="HMG_CoA_syn_Arc"/>
    <property type="match status" value="1"/>
</dbReference>
<dbReference type="NCBIfam" id="NF003274">
    <property type="entry name" value="PRK04262.1"/>
    <property type="match status" value="1"/>
</dbReference>
<dbReference type="PANTHER" id="PTHR43323">
    <property type="entry name" value="3-HYDROXY-3-METHYLGLUTARYL COENZYME A SYNTHASE"/>
    <property type="match status" value="1"/>
</dbReference>
<dbReference type="PANTHER" id="PTHR43323:SF2">
    <property type="entry name" value="HYDROXYMETHYLGLUTARYL-COA SYNTHASE"/>
    <property type="match status" value="1"/>
</dbReference>
<dbReference type="Pfam" id="PF08541">
    <property type="entry name" value="ACP_syn_III_C"/>
    <property type="match status" value="1"/>
</dbReference>
<dbReference type="SUPFAM" id="SSF53901">
    <property type="entry name" value="Thiolase-like"/>
    <property type="match status" value="2"/>
</dbReference>
<gene>
    <name type="ordered locus">SSO0535</name>
    <name type="ORF">C22_016</name>
</gene>
<reference key="1">
    <citation type="journal article" date="2000" name="Genome">
        <title>Gene content and organization of a 281-kbp contig from the genome of the extremely thermophilic archaeon, Sulfolobus solfataricus P2.</title>
        <authorList>
            <person name="Charlebois R.L."/>
            <person name="Singh R.K."/>
            <person name="Chan-Weiher C.C.-Y."/>
            <person name="Allard G."/>
            <person name="Chow C."/>
            <person name="Confalonieri F."/>
            <person name="Curtis B."/>
            <person name="Duguet M."/>
            <person name="Erauso G."/>
            <person name="Faguy D."/>
            <person name="Gaasterland T."/>
            <person name="Garrett R.A."/>
            <person name="Gordon P."/>
            <person name="Jeffries A.C."/>
            <person name="Kozera C."/>
            <person name="Kushwaha N."/>
            <person name="Lafleur E."/>
            <person name="Medina N."/>
            <person name="Peng X."/>
            <person name="Penny S.L."/>
            <person name="She Q."/>
            <person name="St Jean A."/>
            <person name="van der Oost J."/>
            <person name="Young F."/>
            <person name="Zivanovic Y."/>
            <person name="Doolittle W.F."/>
            <person name="Ragan M.A."/>
            <person name="Sensen C.W."/>
        </authorList>
    </citation>
    <scope>NUCLEOTIDE SEQUENCE [LARGE SCALE GENOMIC DNA]</scope>
    <source>
        <strain>ATCC 35092 / DSM 1617 / JCM 11322 / P2</strain>
    </source>
</reference>
<reference key="2">
    <citation type="journal article" date="2001" name="Proc. Natl. Acad. Sci. U.S.A.">
        <title>The complete genome of the crenarchaeon Sulfolobus solfataricus P2.</title>
        <authorList>
            <person name="She Q."/>
            <person name="Singh R.K."/>
            <person name="Confalonieri F."/>
            <person name="Zivanovic Y."/>
            <person name="Allard G."/>
            <person name="Awayez M.J."/>
            <person name="Chan-Weiher C.C.-Y."/>
            <person name="Clausen I.G."/>
            <person name="Curtis B.A."/>
            <person name="De Moors A."/>
            <person name="Erauso G."/>
            <person name="Fletcher C."/>
            <person name="Gordon P.M.K."/>
            <person name="Heikamp-de Jong I."/>
            <person name="Jeffries A.C."/>
            <person name="Kozera C.J."/>
            <person name="Medina N."/>
            <person name="Peng X."/>
            <person name="Thi-Ngoc H.P."/>
            <person name="Redder P."/>
            <person name="Schenk M.E."/>
            <person name="Theriault C."/>
            <person name="Tolstrup N."/>
            <person name="Charlebois R.L."/>
            <person name="Doolittle W.F."/>
            <person name="Duguet M."/>
            <person name="Gaasterland T."/>
            <person name="Garrett R.A."/>
            <person name="Ragan M.A."/>
            <person name="Sensen C.W."/>
            <person name="Van der Oost J."/>
        </authorList>
    </citation>
    <scope>NUCLEOTIDE SEQUENCE [LARGE SCALE GENOMIC DNA]</scope>
    <source>
        <strain>ATCC 35092 / DSM 1617 / JCM 11322 / P2</strain>
    </source>
</reference>